<feature type="chain" id="PRO_1000132073" description="5-oxoprolinase subunit A">
    <location>
        <begin position="1"/>
        <end position="244"/>
    </location>
</feature>
<name>PXPA_SALNS</name>
<evidence type="ECO:0000255" key="1">
    <source>
        <dbReference type="HAMAP-Rule" id="MF_00691"/>
    </source>
</evidence>
<reference key="1">
    <citation type="journal article" date="2011" name="J. Bacteriol.">
        <title>Comparative genomics of 28 Salmonella enterica isolates: evidence for CRISPR-mediated adaptive sublineage evolution.</title>
        <authorList>
            <person name="Fricke W.F."/>
            <person name="Mammel M.K."/>
            <person name="McDermott P.F."/>
            <person name="Tartera C."/>
            <person name="White D.G."/>
            <person name="Leclerc J.E."/>
            <person name="Ravel J."/>
            <person name="Cebula T.A."/>
        </authorList>
    </citation>
    <scope>NUCLEOTIDE SEQUENCE [LARGE SCALE GENOMIC DNA]</scope>
    <source>
        <strain>SL254</strain>
    </source>
</reference>
<organism>
    <name type="scientific">Salmonella newport (strain SL254)</name>
    <dbReference type="NCBI Taxonomy" id="423368"/>
    <lineage>
        <taxon>Bacteria</taxon>
        <taxon>Pseudomonadati</taxon>
        <taxon>Pseudomonadota</taxon>
        <taxon>Gammaproteobacteria</taxon>
        <taxon>Enterobacterales</taxon>
        <taxon>Enterobacteriaceae</taxon>
        <taxon>Salmonella</taxon>
    </lineage>
</organism>
<keyword id="KW-0067">ATP-binding</keyword>
<keyword id="KW-0378">Hydrolase</keyword>
<keyword id="KW-0547">Nucleotide-binding</keyword>
<protein>
    <recommendedName>
        <fullName evidence="1">5-oxoprolinase subunit A</fullName>
        <shortName evidence="1">5-OPase subunit A</shortName>
        <ecNumber evidence="1">3.5.2.9</ecNumber>
    </recommendedName>
    <alternativeName>
        <fullName evidence="1">5-oxoprolinase (ATP-hydrolyzing) subunit A</fullName>
    </alternativeName>
</protein>
<dbReference type="EC" id="3.5.2.9" evidence="1"/>
<dbReference type="EMBL" id="CP001113">
    <property type="protein sequence ID" value="ACF63558.1"/>
    <property type="molecule type" value="Genomic_DNA"/>
</dbReference>
<dbReference type="RefSeq" id="WP_001017924.1">
    <property type="nucleotide sequence ID" value="NC_011080.1"/>
</dbReference>
<dbReference type="SMR" id="B4SZB9"/>
<dbReference type="KEGG" id="see:SNSL254_A0774"/>
<dbReference type="HOGENOM" id="CLU_069535_0_0_6"/>
<dbReference type="Proteomes" id="UP000008824">
    <property type="component" value="Chromosome"/>
</dbReference>
<dbReference type="GO" id="GO:0017168">
    <property type="term" value="F:5-oxoprolinase (ATP-hydrolyzing) activity"/>
    <property type="evidence" value="ECO:0007669"/>
    <property type="project" value="UniProtKB-UniRule"/>
</dbReference>
<dbReference type="GO" id="GO:0005524">
    <property type="term" value="F:ATP binding"/>
    <property type="evidence" value="ECO:0007669"/>
    <property type="project" value="UniProtKB-UniRule"/>
</dbReference>
<dbReference type="GO" id="GO:0005975">
    <property type="term" value="P:carbohydrate metabolic process"/>
    <property type="evidence" value="ECO:0007669"/>
    <property type="project" value="InterPro"/>
</dbReference>
<dbReference type="CDD" id="cd10800">
    <property type="entry name" value="LamB_YcsF_YbgL_like"/>
    <property type="match status" value="1"/>
</dbReference>
<dbReference type="Gene3D" id="3.20.20.370">
    <property type="entry name" value="Glycoside hydrolase/deacetylase"/>
    <property type="match status" value="1"/>
</dbReference>
<dbReference type="HAMAP" id="MF_00691">
    <property type="entry name" value="PxpA"/>
    <property type="match status" value="1"/>
</dbReference>
<dbReference type="InterPro" id="IPR011330">
    <property type="entry name" value="Glyco_hydro/deAcase_b/a-brl"/>
</dbReference>
<dbReference type="InterPro" id="IPR005501">
    <property type="entry name" value="LamB/YcsF/PxpA-like"/>
</dbReference>
<dbReference type="NCBIfam" id="NF003812">
    <property type="entry name" value="PRK05406.1-1"/>
    <property type="match status" value="1"/>
</dbReference>
<dbReference type="NCBIfam" id="NF003814">
    <property type="entry name" value="PRK05406.1-3"/>
    <property type="match status" value="1"/>
</dbReference>
<dbReference type="NCBIfam" id="NF003815">
    <property type="entry name" value="PRK05406.1-4"/>
    <property type="match status" value="1"/>
</dbReference>
<dbReference type="NCBIfam" id="NF003816">
    <property type="entry name" value="PRK05406.1-5"/>
    <property type="match status" value="1"/>
</dbReference>
<dbReference type="PANTHER" id="PTHR30292:SF0">
    <property type="entry name" value="5-OXOPROLINASE SUBUNIT A"/>
    <property type="match status" value="1"/>
</dbReference>
<dbReference type="PANTHER" id="PTHR30292">
    <property type="entry name" value="UNCHARACTERIZED PROTEIN YBGL-RELATED"/>
    <property type="match status" value="1"/>
</dbReference>
<dbReference type="Pfam" id="PF03746">
    <property type="entry name" value="LamB_YcsF"/>
    <property type="match status" value="1"/>
</dbReference>
<dbReference type="SUPFAM" id="SSF88713">
    <property type="entry name" value="Glycoside hydrolase/deacetylase"/>
    <property type="match status" value="1"/>
</dbReference>
<accession>B4SZB9</accession>
<gene>
    <name evidence="1" type="primary">pxpA</name>
    <name type="ordered locus">SNSL254_A0774</name>
</gene>
<sequence>MNIDLNADVGEGCASDSELLTLVSSANIACGFHAGDAQTMLTCVREALKNGVAIGAHPSFPDRDNFGRTAMVLPPETVYAQTLYQIGALGAIVQAQGGVMRHVKPHGMLYNQAAKDPRLAQAIAKAVHDYDPSLILVGLAGSELIRAGERHRLVTRQEVFADRGYQADGSLVPRTQPGALIHDEEQALAQTLDMVQAGRVKSVTGVWTTVTAQTVCIHGDGEYALAFARRLRAAFNARNIHVIA</sequence>
<comment type="function">
    <text evidence="1">Catalyzes the cleavage of 5-oxoproline to form L-glutamate coupled to the hydrolysis of ATP to ADP and inorganic phosphate.</text>
</comment>
<comment type="catalytic activity">
    <reaction evidence="1">
        <text>5-oxo-L-proline + ATP + 2 H2O = L-glutamate + ADP + phosphate + H(+)</text>
        <dbReference type="Rhea" id="RHEA:10348"/>
        <dbReference type="ChEBI" id="CHEBI:15377"/>
        <dbReference type="ChEBI" id="CHEBI:15378"/>
        <dbReference type="ChEBI" id="CHEBI:29985"/>
        <dbReference type="ChEBI" id="CHEBI:30616"/>
        <dbReference type="ChEBI" id="CHEBI:43474"/>
        <dbReference type="ChEBI" id="CHEBI:58402"/>
        <dbReference type="ChEBI" id="CHEBI:456216"/>
        <dbReference type="EC" id="3.5.2.9"/>
    </reaction>
</comment>
<comment type="subunit">
    <text evidence="1">Forms a complex composed of PxpA, PxpB and PxpC.</text>
</comment>
<comment type="similarity">
    <text evidence="1">Belongs to the LamB/PxpA family.</text>
</comment>
<proteinExistence type="inferred from homology"/>